<proteinExistence type="inferred from homology"/>
<geneLocation type="chloroplast"/>
<comment type="function">
    <text evidence="1">NDH shuttles electrons from NAD(P)H:plastoquinone, via FMN and iron-sulfur (Fe-S) centers, to quinones in the photosynthetic chain and possibly in a chloroplast respiratory chain. The immediate electron acceptor for the enzyme in this species is believed to be plastoquinone. Couples the redox reaction to proton translocation, and thus conserves the redox energy in a proton gradient.</text>
</comment>
<comment type="catalytic activity">
    <reaction evidence="1">
        <text>a plastoquinone + NADH + (n+1) H(+)(in) = a plastoquinol + NAD(+) + n H(+)(out)</text>
        <dbReference type="Rhea" id="RHEA:42608"/>
        <dbReference type="Rhea" id="RHEA-COMP:9561"/>
        <dbReference type="Rhea" id="RHEA-COMP:9562"/>
        <dbReference type="ChEBI" id="CHEBI:15378"/>
        <dbReference type="ChEBI" id="CHEBI:17757"/>
        <dbReference type="ChEBI" id="CHEBI:57540"/>
        <dbReference type="ChEBI" id="CHEBI:57945"/>
        <dbReference type="ChEBI" id="CHEBI:62192"/>
    </reaction>
</comment>
<comment type="catalytic activity">
    <reaction evidence="1">
        <text>a plastoquinone + NADPH + (n+1) H(+)(in) = a plastoquinol + NADP(+) + n H(+)(out)</text>
        <dbReference type="Rhea" id="RHEA:42612"/>
        <dbReference type="Rhea" id="RHEA-COMP:9561"/>
        <dbReference type="Rhea" id="RHEA-COMP:9562"/>
        <dbReference type="ChEBI" id="CHEBI:15378"/>
        <dbReference type="ChEBI" id="CHEBI:17757"/>
        <dbReference type="ChEBI" id="CHEBI:57783"/>
        <dbReference type="ChEBI" id="CHEBI:58349"/>
        <dbReference type="ChEBI" id="CHEBI:62192"/>
    </reaction>
</comment>
<comment type="cofactor">
    <cofactor evidence="1">
        <name>[4Fe-4S] cluster</name>
        <dbReference type="ChEBI" id="CHEBI:49883"/>
    </cofactor>
    <text evidence="1">Binds 1 [4Fe-4S] cluster.</text>
</comment>
<comment type="subunit">
    <text evidence="1">NDH is composed of at least 16 different subunits, 5 of which are encoded in the nucleus.</text>
</comment>
<comment type="subcellular location">
    <subcellularLocation>
        <location evidence="1">Plastid</location>
        <location evidence="1">Chloroplast thylakoid membrane</location>
        <topology evidence="1">Peripheral membrane protein</topology>
        <orientation evidence="1">Stromal side</orientation>
    </subcellularLocation>
</comment>
<comment type="similarity">
    <text evidence="1">Belongs to the complex I 20 kDa subunit family.</text>
</comment>
<comment type="sequence caution" evidence="2">
    <conflict type="erroneous initiation">
        <sequence resource="EMBL-CDS" id="ABR01434"/>
    </conflict>
</comment>
<protein>
    <recommendedName>
        <fullName evidence="1">NAD(P)H-quinone oxidoreductase subunit K, chloroplastic</fullName>
        <ecNumber evidence="1">7.1.1.-</ecNumber>
    </recommendedName>
    <alternativeName>
        <fullName evidence="1">NAD(P)H dehydrogenase subunit K</fullName>
    </alternativeName>
    <alternativeName>
        <fullName evidence="1">NADH-plastoquinone oxidoreductase subunit K</fullName>
    </alternativeName>
</protein>
<sequence>MNLIEFTLLDQTTPNSVISTTSNDLSNWSRLSSLWPLLYGTSCCFIEFASLIGSRFDFDRYGLVPRSSPRQADLILTAGTVTMKMAPSLVRLYEQMAEPKYVIAMGACTITGGMFSTDSYSTVRGVDKLIPVDVYLPGCPPKPEAVIDAITKLRKKISREISEDRVMSQRENRSFTTNHKFDIRRSTHTGNYDQGLFYQSSYTSEISSKRFFKSKNSVSSHELVN</sequence>
<name>NDHK_DIOEL</name>
<evidence type="ECO:0000255" key="1">
    <source>
        <dbReference type="HAMAP-Rule" id="MF_01356"/>
    </source>
</evidence>
<evidence type="ECO:0000305" key="2"/>
<reference key="1">
    <citation type="journal article" date="2007" name="Mol. Phylogenet. Evol.">
        <title>Phylogenetic and evolutionary implications of complete chloroplast genome sequences of four early-diverging angiosperms: Buxus (Buxaceae), Chloranthus (Chloranthaceae), Dioscorea (Dioscoreaceae), and Illicium (Schisandraceae).</title>
        <authorList>
            <person name="Hansen D.R."/>
            <person name="Dastidar S.G."/>
            <person name="Cai Z."/>
            <person name="Penaflor C."/>
            <person name="Kuehl J.V."/>
            <person name="Boore J.L."/>
            <person name="Jansen R.K."/>
        </authorList>
    </citation>
    <scope>NUCLEOTIDE SEQUENCE [LARGE SCALE GENOMIC DNA]</scope>
</reference>
<dbReference type="EC" id="7.1.1.-" evidence="1"/>
<dbReference type="EMBL" id="EF380353">
    <property type="protein sequence ID" value="ABR01434.1"/>
    <property type="status" value="ALT_INIT"/>
    <property type="molecule type" value="Genomic_DNA"/>
</dbReference>
<dbReference type="RefSeq" id="YP_001294356.2">
    <property type="nucleotide sequence ID" value="NC_009601.1"/>
</dbReference>
<dbReference type="SMR" id="A6MML1"/>
<dbReference type="GeneID" id="5236607"/>
<dbReference type="GO" id="GO:0009535">
    <property type="term" value="C:chloroplast thylakoid membrane"/>
    <property type="evidence" value="ECO:0007669"/>
    <property type="project" value="UniProtKB-SubCell"/>
</dbReference>
<dbReference type="GO" id="GO:0045271">
    <property type="term" value="C:respiratory chain complex I"/>
    <property type="evidence" value="ECO:0007669"/>
    <property type="project" value="TreeGrafter"/>
</dbReference>
<dbReference type="GO" id="GO:0051539">
    <property type="term" value="F:4 iron, 4 sulfur cluster binding"/>
    <property type="evidence" value="ECO:0007669"/>
    <property type="project" value="UniProtKB-KW"/>
</dbReference>
<dbReference type="GO" id="GO:0005506">
    <property type="term" value="F:iron ion binding"/>
    <property type="evidence" value="ECO:0007669"/>
    <property type="project" value="UniProtKB-UniRule"/>
</dbReference>
<dbReference type="GO" id="GO:0008137">
    <property type="term" value="F:NADH dehydrogenase (ubiquinone) activity"/>
    <property type="evidence" value="ECO:0007669"/>
    <property type="project" value="InterPro"/>
</dbReference>
<dbReference type="GO" id="GO:0048038">
    <property type="term" value="F:quinone binding"/>
    <property type="evidence" value="ECO:0007669"/>
    <property type="project" value="UniProtKB-KW"/>
</dbReference>
<dbReference type="GO" id="GO:0009060">
    <property type="term" value="P:aerobic respiration"/>
    <property type="evidence" value="ECO:0007669"/>
    <property type="project" value="TreeGrafter"/>
</dbReference>
<dbReference type="GO" id="GO:0015990">
    <property type="term" value="P:electron transport coupled proton transport"/>
    <property type="evidence" value="ECO:0007669"/>
    <property type="project" value="TreeGrafter"/>
</dbReference>
<dbReference type="GO" id="GO:0019684">
    <property type="term" value="P:photosynthesis, light reaction"/>
    <property type="evidence" value="ECO:0007669"/>
    <property type="project" value="UniProtKB-UniRule"/>
</dbReference>
<dbReference type="FunFam" id="3.40.50.12280:FF:000003">
    <property type="entry name" value="NAD(P)H-quinone oxidoreductase subunit K, chloroplastic"/>
    <property type="match status" value="1"/>
</dbReference>
<dbReference type="Gene3D" id="3.40.50.12280">
    <property type="match status" value="1"/>
</dbReference>
<dbReference type="HAMAP" id="MF_01356">
    <property type="entry name" value="NDH1_NuoB"/>
    <property type="match status" value="1"/>
</dbReference>
<dbReference type="InterPro" id="IPR006137">
    <property type="entry name" value="NADH_UbQ_OxRdtase-like_20kDa"/>
</dbReference>
<dbReference type="InterPro" id="IPR006138">
    <property type="entry name" value="NADH_UQ_OxRdtase_20Kd_su"/>
</dbReference>
<dbReference type="NCBIfam" id="TIGR01957">
    <property type="entry name" value="nuoB_fam"/>
    <property type="match status" value="1"/>
</dbReference>
<dbReference type="NCBIfam" id="NF005012">
    <property type="entry name" value="PRK06411.1"/>
    <property type="match status" value="1"/>
</dbReference>
<dbReference type="PANTHER" id="PTHR11995">
    <property type="entry name" value="NADH DEHYDROGENASE"/>
    <property type="match status" value="1"/>
</dbReference>
<dbReference type="PANTHER" id="PTHR11995:SF14">
    <property type="entry name" value="NADH DEHYDROGENASE [UBIQUINONE] IRON-SULFUR PROTEIN 7, MITOCHONDRIAL"/>
    <property type="match status" value="1"/>
</dbReference>
<dbReference type="Pfam" id="PF01058">
    <property type="entry name" value="Oxidored_q6"/>
    <property type="match status" value="1"/>
</dbReference>
<dbReference type="SUPFAM" id="SSF56770">
    <property type="entry name" value="HydA/Nqo6-like"/>
    <property type="match status" value="1"/>
</dbReference>
<dbReference type="PROSITE" id="PS01150">
    <property type="entry name" value="COMPLEX1_20K"/>
    <property type="match status" value="1"/>
</dbReference>
<organism>
    <name type="scientific">Dioscorea elephantipes</name>
    <name type="common">Elephant's foot yam</name>
    <name type="synonym">Testudinaria elephantipes</name>
    <dbReference type="NCBI Taxonomy" id="145284"/>
    <lineage>
        <taxon>Eukaryota</taxon>
        <taxon>Viridiplantae</taxon>
        <taxon>Streptophyta</taxon>
        <taxon>Embryophyta</taxon>
        <taxon>Tracheophyta</taxon>
        <taxon>Spermatophyta</taxon>
        <taxon>Magnoliopsida</taxon>
        <taxon>Liliopsida</taxon>
        <taxon>Dioscoreales</taxon>
        <taxon>Dioscoreaceae</taxon>
        <taxon>Dioscorea</taxon>
    </lineage>
</organism>
<gene>
    <name evidence="1" type="primary">ndhK</name>
</gene>
<keyword id="KW-0004">4Fe-4S</keyword>
<keyword id="KW-0150">Chloroplast</keyword>
<keyword id="KW-0408">Iron</keyword>
<keyword id="KW-0411">Iron-sulfur</keyword>
<keyword id="KW-0472">Membrane</keyword>
<keyword id="KW-0479">Metal-binding</keyword>
<keyword id="KW-0520">NAD</keyword>
<keyword id="KW-0521">NADP</keyword>
<keyword id="KW-0934">Plastid</keyword>
<keyword id="KW-0618">Plastoquinone</keyword>
<keyword id="KW-0874">Quinone</keyword>
<keyword id="KW-0793">Thylakoid</keyword>
<keyword id="KW-1278">Translocase</keyword>
<keyword id="KW-0813">Transport</keyword>
<feature type="chain" id="PRO_0000358540" description="NAD(P)H-quinone oxidoreductase subunit K, chloroplastic">
    <location>
        <begin position="1"/>
        <end position="225"/>
    </location>
</feature>
<feature type="binding site" evidence="1">
    <location>
        <position position="43"/>
    </location>
    <ligand>
        <name>[4Fe-4S] cluster</name>
        <dbReference type="ChEBI" id="CHEBI:49883"/>
    </ligand>
</feature>
<feature type="binding site" evidence="1">
    <location>
        <position position="44"/>
    </location>
    <ligand>
        <name>[4Fe-4S] cluster</name>
        <dbReference type="ChEBI" id="CHEBI:49883"/>
    </ligand>
</feature>
<feature type="binding site" evidence="1">
    <location>
        <position position="108"/>
    </location>
    <ligand>
        <name>[4Fe-4S] cluster</name>
        <dbReference type="ChEBI" id="CHEBI:49883"/>
    </ligand>
</feature>
<feature type="binding site" evidence="1">
    <location>
        <position position="139"/>
    </location>
    <ligand>
        <name>[4Fe-4S] cluster</name>
        <dbReference type="ChEBI" id="CHEBI:49883"/>
    </ligand>
</feature>
<accession>A6MML1</accession>